<proteinExistence type="evidence at protein level"/>
<gene>
    <name evidence="10" type="primary">ast-1</name>
    <name evidence="10" type="ORF">T08H4.3</name>
</gene>
<keyword id="KW-0966">Cell projection</keyword>
<keyword id="KW-0238">DNA-binding</keyword>
<keyword id="KW-0539">Nucleus</keyword>
<keyword id="KW-1185">Reference proteome</keyword>
<keyword id="KW-0804">Transcription</keyword>
<keyword id="KW-0805">Transcription regulation</keyword>
<sequence length="377" mass="41466">MQVVSSATLPPTVASADLAIVGGRSSDEDVIKYSAIQTIKQEQQQQQQQQSNTALPSYNFPFFNGMQNDFPPNRMLYNDNTMQKSENDHFTGMNLSTSASSSGNSTSSKDQSRRQFYTESSNSSGNGAAATSGSNGSSSSTESKSDVFNISMNAFAATPGSKSEDHNIPSFNMLSSYYTGALKLSNSTSFANPDPYQILGPTSKNLAHSGSGQTQLWQFLLELLSDKRYSEVITWEGTQGEFKLVDPDEVARKWGERKSKPNMNYDKMSRALRYYYDKNIMAKVHGKRYAYKFDFQGIAQALQPPTASHPQDYFNSHAMGRIAPDFSSWTSANYRSLNIAGFNNGSTIFNPSVNYSAFGATGTSNNLSAARAFPLYR</sequence>
<feature type="chain" id="PRO_0000454715" description="Transcription factor ast-1">
    <location>
        <begin position="1"/>
        <end position="377"/>
    </location>
</feature>
<feature type="DNA-binding region" description="ETS" evidence="1">
    <location>
        <begin position="214"/>
        <end position="294"/>
    </location>
</feature>
<feature type="region of interest" description="Disordered" evidence="3">
    <location>
        <begin position="72"/>
        <end position="143"/>
    </location>
</feature>
<feature type="compositionally biased region" description="Low complexity" evidence="3">
    <location>
        <begin position="96"/>
        <end position="109"/>
    </location>
</feature>
<feature type="compositionally biased region" description="Low complexity" evidence="3">
    <location>
        <begin position="118"/>
        <end position="142"/>
    </location>
</feature>
<feature type="mutagenesis site" description="In rh300; interneuron axon guidance defects in the ventral nerve cord (VNC). Partial differentiation defects of the VNC pioneer neuron, AVG. Abolishes expression of tyrosine monooxygenase cat-2 in the male-specific ray neurons and other dopaminergic neurons." evidence="4 5 6">
    <original>G</original>
    <variation>R</variation>
    <location>
        <position position="240"/>
    </location>
</feature>
<feature type="mutagenesis site" description="In hd1; interneuron axon guidance defects in the ventral nerve cord (VNC). Reduced expression of tyrosine monooxygenase cat-2 in dopaminergic neurons." evidence="4 5">
    <original>A</original>
    <variation>V</variation>
    <location>
        <position position="251"/>
    </location>
</feature>
<feature type="mutagenesis site" description="In ot417; defects in dopaminergic neuron fate. Reduced expression of tyrosine monooxygenase cat-2 in dopaminergic neurons." evidence="5">
    <original>M</original>
    <variation>I</variation>
    <location>
        <position position="263"/>
    </location>
</feature>
<dbReference type="EMBL" id="BX284602">
    <property type="protein sequence ID" value="CCD73307.1"/>
    <property type="molecule type" value="Genomic_DNA"/>
</dbReference>
<dbReference type="PIR" id="T34343">
    <property type="entry name" value="T34343"/>
</dbReference>
<dbReference type="RefSeq" id="NP_001022326.1">
    <property type="nucleotide sequence ID" value="NM_001027155.6"/>
</dbReference>
<dbReference type="SMR" id="Q22355"/>
<dbReference type="FunCoup" id="Q22355">
    <property type="interactions" value="130"/>
</dbReference>
<dbReference type="STRING" id="6239.T08H4.3.1"/>
<dbReference type="PaxDb" id="6239-T08H4.3"/>
<dbReference type="PeptideAtlas" id="Q22355"/>
<dbReference type="EnsemblMetazoa" id="T08H4.3.1">
    <property type="protein sequence ID" value="T08H4.3.1"/>
    <property type="gene ID" value="WBGene00020368"/>
</dbReference>
<dbReference type="GeneID" id="173749"/>
<dbReference type="KEGG" id="cel:CELE_T08H4.3"/>
<dbReference type="UCSC" id="T08H4.3">
    <property type="organism name" value="c. elegans"/>
</dbReference>
<dbReference type="AGR" id="WB:WBGene00020368"/>
<dbReference type="CTD" id="173749"/>
<dbReference type="WormBase" id="T08H4.3">
    <property type="protein sequence ID" value="CE19576"/>
    <property type="gene ID" value="WBGene00020368"/>
    <property type="gene designation" value="ast-1"/>
</dbReference>
<dbReference type="eggNOG" id="KOG3806">
    <property type="taxonomic scope" value="Eukaryota"/>
</dbReference>
<dbReference type="HOGENOM" id="CLU_045216_1_0_1"/>
<dbReference type="InParanoid" id="Q22355"/>
<dbReference type="OMA" id="NSHAMGR"/>
<dbReference type="OrthoDB" id="10067219at2759"/>
<dbReference type="Reactome" id="R-CEL-2559585">
    <property type="pathway name" value="Oncogene Induced Senescence"/>
</dbReference>
<dbReference type="PRO" id="PR:Q22355"/>
<dbReference type="Proteomes" id="UP000001940">
    <property type="component" value="Chromosome II"/>
</dbReference>
<dbReference type="Bgee" id="WBGene00020368">
    <property type="expression patterns" value="Expressed in pharyngeal muscle cell (C elegans) and 3 other cell types or tissues"/>
</dbReference>
<dbReference type="GO" id="GO:0043005">
    <property type="term" value="C:neuron projection"/>
    <property type="evidence" value="ECO:0007669"/>
    <property type="project" value="UniProtKB-SubCell"/>
</dbReference>
<dbReference type="GO" id="GO:0005634">
    <property type="term" value="C:nucleus"/>
    <property type="evidence" value="ECO:0000314"/>
    <property type="project" value="UniProtKB"/>
</dbReference>
<dbReference type="GO" id="GO:0000981">
    <property type="term" value="F:DNA-binding transcription factor activity, RNA polymerase II-specific"/>
    <property type="evidence" value="ECO:0000318"/>
    <property type="project" value="GO_Central"/>
</dbReference>
<dbReference type="GO" id="GO:0043565">
    <property type="term" value="F:sequence-specific DNA binding"/>
    <property type="evidence" value="ECO:0007669"/>
    <property type="project" value="InterPro"/>
</dbReference>
<dbReference type="GO" id="GO:0007411">
    <property type="term" value="P:axon guidance"/>
    <property type="evidence" value="ECO:0000315"/>
    <property type="project" value="UniProtKB"/>
</dbReference>
<dbReference type="GO" id="GO:0030154">
    <property type="term" value="P:cell differentiation"/>
    <property type="evidence" value="ECO:0000318"/>
    <property type="project" value="GO_Central"/>
</dbReference>
<dbReference type="GO" id="GO:0071542">
    <property type="term" value="P:dopaminergic neuron differentiation"/>
    <property type="evidence" value="ECO:0000315"/>
    <property type="project" value="UniProtKB"/>
</dbReference>
<dbReference type="GO" id="GO:0110040">
    <property type="term" value="P:nematode pharynx morphogenesis"/>
    <property type="evidence" value="ECO:0000315"/>
    <property type="project" value="UniProtKB"/>
</dbReference>
<dbReference type="GO" id="GO:0030182">
    <property type="term" value="P:neuron differentiation"/>
    <property type="evidence" value="ECO:0000315"/>
    <property type="project" value="UniProtKB"/>
</dbReference>
<dbReference type="GO" id="GO:0048664">
    <property type="term" value="P:neuron fate determination"/>
    <property type="evidence" value="ECO:0000315"/>
    <property type="project" value="UniProtKB"/>
</dbReference>
<dbReference type="GO" id="GO:0045944">
    <property type="term" value="P:positive regulation of transcription by RNA polymerase II"/>
    <property type="evidence" value="ECO:0000315"/>
    <property type="project" value="WormBase"/>
</dbReference>
<dbReference type="GO" id="GO:0110037">
    <property type="term" value="P:regulation of nematode male tail tip morphogenesis"/>
    <property type="evidence" value="ECO:0000315"/>
    <property type="project" value="UniProtKB"/>
</dbReference>
<dbReference type="GO" id="GO:0006357">
    <property type="term" value="P:regulation of transcription by RNA polymerase II"/>
    <property type="evidence" value="ECO:0000318"/>
    <property type="project" value="GO_Central"/>
</dbReference>
<dbReference type="FunFam" id="1.10.10.10:FF:000039">
    <property type="entry name" value="Friend leukemia integration 1 transcription factor"/>
    <property type="match status" value="1"/>
</dbReference>
<dbReference type="Gene3D" id="1.10.10.10">
    <property type="entry name" value="Winged helix-like DNA-binding domain superfamily/Winged helix DNA-binding domain"/>
    <property type="match status" value="1"/>
</dbReference>
<dbReference type="InterPro" id="IPR000418">
    <property type="entry name" value="Ets_dom"/>
</dbReference>
<dbReference type="InterPro" id="IPR046328">
    <property type="entry name" value="ETS_fam"/>
</dbReference>
<dbReference type="InterPro" id="IPR036388">
    <property type="entry name" value="WH-like_DNA-bd_sf"/>
</dbReference>
<dbReference type="InterPro" id="IPR036390">
    <property type="entry name" value="WH_DNA-bd_sf"/>
</dbReference>
<dbReference type="PANTHER" id="PTHR11849">
    <property type="entry name" value="ETS"/>
    <property type="match status" value="1"/>
</dbReference>
<dbReference type="PANTHER" id="PTHR11849:SF287">
    <property type="entry name" value="TRANSCRIPTION FACTOR AST-1"/>
    <property type="match status" value="1"/>
</dbReference>
<dbReference type="Pfam" id="PF00178">
    <property type="entry name" value="Ets"/>
    <property type="match status" value="1"/>
</dbReference>
<dbReference type="PRINTS" id="PR00454">
    <property type="entry name" value="ETSDOMAIN"/>
</dbReference>
<dbReference type="SMART" id="SM00413">
    <property type="entry name" value="ETS"/>
    <property type="match status" value="1"/>
</dbReference>
<dbReference type="SUPFAM" id="SSF46785">
    <property type="entry name" value="Winged helix' DNA-binding domain"/>
    <property type="match status" value="1"/>
</dbReference>
<dbReference type="PROSITE" id="PS00345">
    <property type="entry name" value="ETS_DOMAIN_1"/>
    <property type="match status" value="1"/>
</dbReference>
<dbReference type="PROSITE" id="PS00346">
    <property type="entry name" value="ETS_DOMAIN_2"/>
    <property type="match status" value="1"/>
</dbReference>
<dbReference type="PROSITE" id="PS50061">
    <property type="entry name" value="ETS_DOMAIN_3"/>
    <property type="match status" value="1"/>
</dbReference>
<protein>
    <recommendedName>
        <fullName evidence="8">Transcription factor ast-1</fullName>
    </recommendedName>
    <alternativeName>
        <fullName evidence="10">axon steering defect-1</fullName>
    </alternativeName>
</protein>
<reference evidence="9" key="1">
    <citation type="journal article" date="1998" name="Science">
        <title>Genome sequence of the nematode C. elegans: a platform for investigating biology.</title>
        <authorList>
            <consortium name="The C. elegans sequencing consortium"/>
        </authorList>
    </citation>
    <scope>NUCLEOTIDE SEQUENCE [LARGE SCALE GENOMIC DNA]</scope>
    <source>
        <strain evidence="9">Bristol N2</strain>
    </source>
</reference>
<reference evidence="8" key="2">
    <citation type="journal article" date="2006" name="Dev. Biol.">
        <title>AST-1, a novel ETS-box transcription factor, controls axon guidance and pharynx development in C. elegans.</title>
        <authorList>
            <person name="Schmid C."/>
            <person name="Schwarz V."/>
            <person name="Hutter H."/>
        </authorList>
    </citation>
    <scope>FUNCTION</scope>
    <scope>SUBCELLULAR LOCATION</scope>
    <scope>DEVELOPMENTAL STAGE</scope>
    <scope>MUTAGENESIS OF GLY-240 AND ALA-251</scope>
</reference>
<reference evidence="8" key="3">
    <citation type="journal article" date="2009" name="Nature">
        <title>Gene regulatory logic of dopamine neuron differentiation.</title>
        <authorList>
            <person name="Flames N."/>
            <person name="Hobert O."/>
        </authorList>
    </citation>
    <scope>FUNCTION</scope>
    <scope>DEVELOPMENTAL STAGE</scope>
    <scope>MUTAGENESIS OF MET-263</scope>
</reference>
<reference evidence="8" key="4">
    <citation type="journal article" date="2011" name="PLoS ONE">
        <title>Multiple doublesex-related genes specify critical cell fates in a C. elegans male neural circuit.</title>
        <authorList>
            <person name="Siehr M.S."/>
            <person name="Koo P.K."/>
            <person name="Sherlekar A.L."/>
            <person name="Bian X."/>
            <person name="Bunkers M.R."/>
            <person name="Miller R.M."/>
            <person name="Portman D.S."/>
            <person name="Lints R."/>
        </authorList>
    </citation>
    <scope>FUNCTION</scope>
    <scope>SUBCELLULAR LOCATION</scope>
    <scope>TISSUE SPECIFICITY</scope>
    <scope>DISRUPTION PHENOTYPE</scope>
    <scope>MUTAGENESIS OF GLY-240</scope>
</reference>
<reference evidence="8" key="5">
    <citation type="journal article" date="2013" name="Genes Dev.">
        <title>A combinatorial regulatory signature controls terminal differentiation of the dopaminergic nervous system in C. elegans.</title>
        <authorList>
            <person name="Doitsidou M."/>
            <person name="Flames N."/>
            <person name="Topalidou I."/>
            <person name="Abe N."/>
            <person name="Felton T."/>
            <person name="Remesal L."/>
            <person name="Popovitchenko T."/>
            <person name="Mann R."/>
            <person name="Chalfie M."/>
            <person name="Hobert O."/>
        </authorList>
    </citation>
    <scope>FUNCTION</scope>
</reference>
<accession>Q22355</accession>
<organism evidence="9">
    <name type="scientific">Caenorhabditis elegans</name>
    <dbReference type="NCBI Taxonomy" id="6239"/>
    <lineage>
        <taxon>Eukaryota</taxon>
        <taxon>Metazoa</taxon>
        <taxon>Ecdysozoa</taxon>
        <taxon>Nematoda</taxon>
        <taxon>Chromadorea</taxon>
        <taxon>Rhabditida</taxon>
        <taxon>Rhabditina</taxon>
        <taxon>Rhabditomorpha</taxon>
        <taxon>Rhabditoidea</taxon>
        <taxon>Rhabditidae</taxon>
        <taxon>Peloderinae</taxon>
        <taxon>Caenorhabditis</taxon>
    </lineage>
</organism>
<name>AST1_CAEEL</name>
<evidence type="ECO:0000255" key="1">
    <source>
        <dbReference type="PROSITE-ProRule" id="PRU00237"/>
    </source>
</evidence>
<evidence type="ECO:0000255" key="2">
    <source>
        <dbReference type="RuleBase" id="RU004019"/>
    </source>
</evidence>
<evidence type="ECO:0000256" key="3">
    <source>
        <dbReference type="SAM" id="MobiDB-lite"/>
    </source>
</evidence>
<evidence type="ECO:0000269" key="4">
    <source>
    </source>
</evidence>
<evidence type="ECO:0000269" key="5">
    <source>
    </source>
</evidence>
<evidence type="ECO:0000269" key="6">
    <source>
    </source>
</evidence>
<evidence type="ECO:0000269" key="7">
    <source>
    </source>
</evidence>
<evidence type="ECO:0000305" key="8"/>
<evidence type="ECO:0000312" key="9">
    <source>
        <dbReference type="Proteomes" id="UP000001940"/>
    </source>
</evidence>
<evidence type="ECO:0000312" key="10">
    <source>
        <dbReference type="WormBase" id="T08H4.3"/>
    </source>
</evidence>
<comment type="function">
    <text evidence="4 5 6 7">Transcription factor (PubMed:16584723, PubMed:19287374, PubMed:23788625). Probably binds to DNA sequences containing the consensus motif 5'-CGGA[AT][AG]-3' (PubMed:19287374). Positively modulates expression of dopamine pathway genes, acting as a terminal selector for differentiation of dopaminergic neurons; may act in concert with homeobox proteins ceh-40, ceh-43 and ceh-20 (PubMed:19287374, PubMed:22069471, PubMed:23788625). Required for axon navigation in some interneurons, perhaps acting in the same pathways as basement membrane protein nid-1 and unc-6/netrin (PubMed:16584723). Plays a role in the differentiation of the ventral cord pioneer neuron AVG (PubMed:16584723). Required for morphogenesis of the pharynx (PubMed:16584723).</text>
</comment>
<comment type="subcellular location">
    <subcellularLocation>
        <location evidence="2 4 6">Nucleus</location>
    </subcellularLocation>
    <subcellularLocation>
        <location evidence="4">Cell projection</location>
        <location evidence="4">Neuron projection</location>
    </subcellularLocation>
    <text evidence="4">Initially localized only in the nucleus, but later in development, at about the 3-fold stage, expressed elsewhere in the cell body and also in the neuronal projections.</text>
</comment>
<comment type="tissue specificity">
    <text evidence="6">Expressed in the A-neurons in the male-specific genital sensilla (simple sense organs) known as rays.</text>
</comment>
<comment type="developmental stage">
    <text evidence="4 5">Expressed in the embryo in sensory neurons with 6-fold symmetry, probably the inner labial neurons (PubMed:16584723). Expressed between comma and 3-fold stage, diminishing afterwards and absent in larval stages and adults (PubMed:16584723). Expressed in all dopaminergic neurons throughout postembryonic stages (PubMed:19287374). Expressed in a few cells in the pharynx at the 2-fold stage (PubMed:16584723).</text>
</comment>
<comment type="disruption phenotype">
    <text evidence="6">RNAi-mediated knockdown abolishes expression of tyrosine monooxygenase cat-2 in neurons in the male-specific genital sensilla (simple sense organs) known as rays.</text>
</comment>
<comment type="similarity">
    <text evidence="8">Belongs to the ETS family.</text>
</comment>